<feature type="signal peptide" evidence="3 4">
    <location>
        <begin position="1"/>
        <end position="24"/>
    </location>
</feature>
<feature type="chain" id="PRO_0000419228" description="Kunitz-type serine protease inhibitor spermatin" evidence="4">
    <location>
        <begin position="25"/>
        <end position="81"/>
    </location>
</feature>
<feature type="domain" description="BPTI/Kunitz inhibitor" evidence="2">
    <location>
        <begin position="29"/>
        <end position="79"/>
    </location>
</feature>
<feature type="disulfide bond" evidence="2">
    <location>
        <begin position="29"/>
        <end position="79"/>
    </location>
</feature>
<feature type="disulfide bond" evidence="2">
    <location>
        <begin position="38"/>
        <end position="62"/>
    </location>
</feature>
<feature type="disulfide bond" evidence="2">
    <location>
        <begin position="54"/>
        <end position="75"/>
    </location>
</feature>
<dbReference type="EMBL" id="EU196560">
    <property type="protein sequence ID" value="ABX82869.1"/>
    <property type="molecule type" value="mRNA"/>
</dbReference>
<dbReference type="SMR" id="C1IC52"/>
<dbReference type="MEROPS" id="I02.055"/>
<dbReference type="GO" id="GO:0005576">
    <property type="term" value="C:extracellular region"/>
    <property type="evidence" value="ECO:0007669"/>
    <property type="project" value="UniProtKB-SubCell"/>
</dbReference>
<dbReference type="GO" id="GO:0004867">
    <property type="term" value="F:serine-type endopeptidase inhibitor activity"/>
    <property type="evidence" value="ECO:0007669"/>
    <property type="project" value="UniProtKB-KW"/>
</dbReference>
<dbReference type="GO" id="GO:0090729">
    <property type="term" value="F:toxin activity"/>
    <property type="evidence" value="ECO:0007669"/>
    <property type="project" value="UniProtKB-KW"/>
</dbReference>
<dbReference type="CDD" id="cd22594">
    <property type="entry name" value="Kunitz_textilinin-like"/>
    <property type="match status" value="1"/>
</dbReference>
<dbReference type="FunFam" id="4.10.410.10:FF:000021">
    <property type="entry name" value="Serine protease inhibitor, putative"/>
    <property type="match status" value="1"/>
</dbReference>
<dbReference type="Gene3D" id="4.10.410.10">
    <property type="entry name" value="Pancreatic trypsin inhibitor Kunitz domain"/>
    <property type="match status" value="1"/>
</dbReference>
<dbReference type="InterPro" id="IPR002223">
    <property type="entry name" value="Kunitz_BPTI"/>
</dbReference>
<dbReference type="InterPro" id="IPR036880">
    <property type="entry name" value="Kunitz_BPTI_sf"/>
</dbReference>
<dbReference type="InterPro" id="IPR020901">
    <property type="entry name" value="Prtase_inh_Kunz-CS"/>
</dbReference>
<dbReference type="InterPro" id="IPR050098">
    <property type="entry name" value="TFPI/VKTCI-like"/>
</dbReference>
<dbReference type="PANTHER" id="PTHR10083">
    <property type="entry name" value="KUNITZ-TYPE PROTEASE INHIBITOR-RELATED"/>
    <property type="match status" value="1"/>
</dbReference>
<dbReference type="Pfam" id="PF00014">
    <property type="entry name" value="Kunitz_BPTI"/>
    <property type="match status" value="1"/>
</dbReference>
<dbReference type="PRINTS" id="PR00759">
    <property type="entry name" value="BASICPTASE"/>
</dbReference>
<dbReference type="SMART" id="SM00131">
    <property type="entry name" value="KU"/>
    <property type="match status" value="1"/>
</dbReference>
<dbReference type="SUPFAM" id="SSF57362">
    <property type="entry name" value="BPTI-like"/>
    <property type="match status" value="1"/>
</dbReference>
<dbReference type="PROSITE" id="PS00280">
    <property type="entry name" value="BPTI_KUNITZ_1"/>
    <property type="match status" value="1"/>
</dbReference>
<dbReference type="PROSITE" id="PS50279">
    <property type="entry name" value="BPTI_KUNITZ_2"/>
    <property type="match status" value="1"/>
</dbReference>
<protein>
    <recommendedName>
        <fullName evidence="6">Kunitz-type serine protease inhibitor spermatin</fullName>
    </recommendedName>
    <alternativeName>
        <fullName>Kunitz inhibitor KIn-II</fullName>
    </alternativeName>
    <alternativeName>
        <fullName>Protease inhibitor 2</fullName>
    </alternativeName>
</protein>
<organism>
    <name type="scientific">Walterinnesia aegyptia</name>
    <name type="common">Desert black snake</name>
    <dbReference type="NCBI Taxonomy" id="64182"/>
    <lineage>
        <taxon>Eukaryota</taxon>
        <taxon>Metazoa</taxon>
        <taxon>Chordata</taxon>
        <taxon>Craniata</taxon>
        <taxon>Vertebrata</taxon>
        <taxon>Euteleostomi</taxon>
        <taxon>Lepidosauria</taxon>
        <taxon>Squamata</taxon>
        <taxon>Bifurcata</taxon>
        <taxon>Unidentata</taxon>
        <taxon>Episquamata</taxon>
        <taxon>Toxicofera</taxon>
        <taxon>Serpentes</taxon>
        <taxon>Colubroidea</taxon>
        <taxon>Elapidae</taxon>
        <taxon>Elapinae</taxon>
        <taxon>Walterinnesia</taxon>
    </lineage>
</organism>
<accession>C1IC52</accession>
<comment type="function">
    <text evidence="1">Snake venom serine protease inhibitor.</text>
</comment>
<comment type="subcellular location">
    <subcellularLocation>
        <location evidence="3 4">Secreted</location>
    </subcellularLocation>
</comment>
<comment type="tissue specificity">
    <text evidence="3">Expressed by the venom gland.</text>
</comment>
<comment type="mass spectrometry"/>
<comment type="mass spectrometry"/>
<comment type="similarity">
    <text evidence="7">Belongs to the venom Kunitz-type family.</text>
</comment>
<sequence>MSSGCLLLLLGLLTLWAELTPVSGRPRLCELPAESGLCNAYIPSFYYNPHSHKCQKFMYGGCGGNANNFKTIDECHRTCVG</sequence>
<reference key="1">
    <citation type="journal article" date="2008" name="Toxicon">
        <title>Cloning, characterization and phylogenetic analyses of members of three major venom families from a single specimen of Walterinnesia aegyptia.</title>
        <authorList>
            <person name="Tsai H.-Y."/>
            <person name="Wang Y.M."/>
            <person name="Tsai I.-H."/>
        </authorList>
    </citation>
    <scope>NUCLEOTIDE SEQUENCE [MRNA]</scope>
    <scope>PROTEIN SEQUENCE OF 25-40</scope>
    <scope>SUBCELLULAR LOCATION</scope>
    <scope>TISSUE SPECIFICITY</scope>
    <scope>MASS SPECTROMETRY</scope>
    <source>
        <tissue>Venom</tissue>
        <tissue evidence="5">Venom gland</tissue>
    </source>
</reference>
<reference key="2">
    <citation type="submission" date="2017-06" db="UniProtKB">
        <authorList>
            <person name="De Waard M."/>
        </authorList>
    </citation>
    <scope>PROTEIN SEQUENCE OF 25-81</scope>
    <scope>SUBCELLULAR LOCATION</scope>
    <scope>MASS SPECTROMETRY</scope>
    <source>
        <tissue evidence="6">Venom</tissue>
    </source>
</reference>
<proteinExistence type="evidence at protein level"/>
<name>VKT2_WALAE</name>
<keyword id="KW-0903">Direct protein sequencing</keyword>
<keyword id="KW-1015">Disulfide bond</keyword>
<keyword id="KW-0646">Protease inhibitor</keyword>
<keyword id="KW-0964">Secreted</keyword>
<keyword id="KW-0722">Serine protease inhibitor</keyword>
<keyword id="KW-0732">Signal</keyword>
<keyword id="KW-0800">Toxin</keyword>
<evidence type="ECO:0000250" key="1"/>
<evidence type="ECO:0000255" key="2">
    <source>
        <dbReference type="PROSITE-ProRule" id="PRU00031"/>
    </source>
</evidence>
<evidence type="ECO:0000269" key="3">
    <source>
    </source>
</evidence>
<evidence type="ECO:0000269" key="4">
    <source ref="2"/>
</evidence>
<evidence type="ECO:0000303" key="5">
    <source>
    </source>
</evidence>
<evidence type="ECO:0000303" key="6">
    <source ref="2"/>
</evidence>
<evidence type="ECO:0000305" key="7"/>